<reference key="1">
    <citation type="journal article" date="2009" name="PLoS Genet.">
        <title>Organised genome dynamics in the Escherichia coli species results in highly diverse adaptive paths.</title>
        <authorList>
            <person name="Touchon M."/>
            <person name="Hoede C."/>
            <person name="Tenaillon O."/>
            <person name="Barbe V."/>
            <person name="Baeriswyl S."/>
            <person name="Bidet P."/>
            <person name="Bingen E."/>
            <person name="Bonacorsi S."/>
            <person name="Bouchier C."/>
            <person name="Bouvet O."/>
            <person name="Calteau A."/>
            <person name="Chiapello H."/>
            <person name="Clermont O."/>
            <person name="Cruveiller S."/>
            <person name="Danchin A."/>
            <person name="Diard M."/>
            <person name="Dossat C."/>
            <person name="Karoui M.E."/>
            <person name="Frapy E."/>
            <person name="Garry L."/>
            <person name="Ghigo J.M."/>
            <person name="Gilles A.M."/>
            <person name="Johnson J."/>
            <person name="Le Bouguenec C."/>
            <person name="Lescat M."/>
            <person name="Mangenot S."/>
            <person name="Martinez-Jehanne V."/>
            <person name="Matic I."/>
            <person name="Nassif X."/>
            <person name="Oztas S."/>
            <person name="Petit M.A."/>
            <person name="Pichon C."/>
            <person name="Rouy Z."/>
            <person name="Ruf C.S."/>
            <person name="Schneider D."/>
            <person name="Tourret J."/>
            <person name="Vacherie B."/>
            <person name="Vallenet D."/>
            <person name="Medigue C."/>
            <person name="Rocha E.P.C."/>
            <person name="Denamur E."/>
        </authorList>
    </citation>
    <scope>NUCLEOTIDE SEQUENCE [LARGE SCALE GENOMIC DNA]</scope>
    <source>
        <strain>55989 / EAEC</strain>
    </source>
</reference>
<name>YCGL_ECO55</name>
<feature type="chain" id="PRO_0000375289" description="Protein YcgL">
    <location>
        <begin position="1"/>
        <end position="108"/>
    </location>
</feature>
<feature type="domain" description="YcgL" evidence="1">
    <location>
        <begin position="12"/>
        <end position="96"/>
    </location>
</feature>
<gene>
    <name evidence="1" type="primary">ycgL</name>
    <name type="ordered locus">EC55989_1272</name>
</gene>
<keyword id="KW-1185">Reference proteome</keyword>
<sequence length="108" mass="12400">MPKPGILKSKSMFCVIYRSSKRDQTYLYVEKKDDFSRVPEELMKGFGQPQLAMILPLDGRKKLVNADIEKVKLALTEQGYYLQLPPPPEDLLKQHLSVMGQKTDDTNK</sequence>
<organism>
    <name type="scientific">Escherichia coli (strain 55989 / EAEC)</name>
    <dbReference type="NCBI Taxonomy" id="585055"/>
    <lineage>
        <taxon>Bacteria</taxon>
        <taxon>Pseudomonadati</taxon>
        <taxon>Pseudomonadota</taxon>
        <taxon>Gammaproteobacteria</taxon>
        <taxon>Enterobacterales</taxon>
        <taxon>Enterobacteriaceae</taxon>
        <taxon>Escherichia</taxon>
    </lineage>
</organism>
<dbReference type="EMBL" id="CU928145">
    <property type="protein sequence ID" value="CAU97131.1"/>
    <property type="molecule type" value="Genomic_DNA"/>
</dbReference>
<dbReference type="SMR" id="B7LGT7"/>
<dbReference type="KEGG" id="eck:EC55989_1272"/>
<dbReference type="HOGENOM" id="CLU_155118_1_0_6"/>
<dbReference type="Proteomes" id="UP000000746">
    <property type="component" value="Chromosome"/>
</dbReference>
<dbReference type="Gene3D" id="3.10.510.20">
    <property type="entry name" value="YcgL domain"/>
    <property type="match status" value="1"/>
</dbReference>
<dbReference type="HAMAP" id="MF_01866">
    <property type="entry name" value="UPF0745"/>
    <property type="match status" value="1"/>
</dbReference>
<dbReference type="InterPro" id="IPR038068">
    <property type="entry name" value="YcgL-like_sf"/>
</dbReference>
<dbReference type="InterPro" id="IPR027354">
    <property type="entry name" value="YcgL_dom"/>
</dbReference>
<dbReference type="PANTHER" id="PTHR38109">
    <property type="entry name" value="PROTEIN YCGL"/>
    <property type="match status" value="1"/>
</dbReference>
<dbReference type="PANTHER" id="PTHR38109:SF1">
    <property type="entry name" value="PROTEIN YCGL"/>
    <property type="match status" value="1"/>
</dbReference>
<dbReference type="Pfam" id="PF05166">
    <property type="entry name" value="YcgL"/>
    <property type="match status" value="1"/>
</dbReference>
<dbReference type="SUPFAM" id="SSF160191">
    <property type="entry name" value="YcgL-like"/>
    <property type="match status" value="1"/>
</dbReference>
<dbReference type="PROSITE" id="PS51648">
    <property type="entry name" value="YCGL"/>
    <property type="match status" value="1"/>
</dbReference>
<protein>
    <recommendedName>
        <fullName evidence="1">Protein YcgL</fullName>
    </recommendedName>
</protein>
<evidence type="ECO:0000255" key="1">
    <source>
        <dbReference type="HAMAP-Rule" id="MF_01866"/>
    </source>
</evidence>
<proteinExistence type="inferred from homology"/>
<accession>B7LGT7</accession>